<accession>F4IWB3</accession>
<accession>Q9LIH4</accession>
<sequence length="108" mass="12129">MASKKARKPNRAEKKLTRSCFKKQVPQHNNINTNTIYSVPSPSPAAVLTSPGGCCTPKAKKSRIPEMLTCPPAPKKQRVSKNCVLRRRQIVFFAPPEIELFFVNAHDR</sequence>
<name>SMR13_ARATH</name>
<dbReference type="EMBL" id="AP001304">
    <property type="protein sequence ID" value="BAB01899.1"/>
    <property type="status" value="ALT_SEQ"/>
    <property type="molecule type" value="Genomic_DNA"/>
</dbReference>
<dbReference type="EMBL" id="CP002686">
    <property type="protein sequence ID" value="AEE76437.1"/>
    <property type="molecule type" value="Genomic_DNA"/>
</dbReference>
<dbReference type="RefSeq" id="NP_001154630.1">
    <property type="nucleotide sequence ID" value="NM_001161158.2"/>
</dbReference>
<dbReference type="FunCoup" id="F4IWB3">
    <property type="interactions" value="4"/>
</dbReference>
<dbReference type="PaxDb" id="3702-AT3G20898.1"/>
<dbReference type="EnsemblPlants" id="AT3G20898.1">
    <property type="protein sequence ID" value="AT3G20898.1"/>
    <property type="gene ID" value="AT3G20898"/>
</dbReference>
<dbReference type="GeneID" id="7922426"/>
<dbReference type="Gramene" id="AT3G20898.1">
    <property type="protein sequence ID" value="AT3G20898.1"/>
    <property type="gene ID" value="AT3G20898"/>
</dbReference>
<dbReference type="KEGG" id="ath:AT3G20898"/>
<dbReference type="Araport" id="AT3G20898"/>
<dbReference type="TAIR" id="AT3G20898"/>
<dbReference type="eggNOG" id="ENOG502S7SX">
    <property type="taxonomic scope" value="Eukaryota"/>
</dbReference>
<dbReference type="HOGENOM" id="CLU_128426_1_0_1"/>
<dbReference type="InParanoid" id="F4IWB3"/>
<dbReference type="OMA" id="QDTNYSI"/>
<dbReference type="PRO" id="PR:F4IWB3"/>
<dbReference type="Proteomes" id="UP000006548">
    <property type="component" value="Chromosome 3"/>
</dbReference>
<dbReference type="ExpressionAtlas" id="F4IWB3">
    <property type="expression patterns" value="baseline and differential"/>
</dbReference>
<dbReference type="GO" id="GO:0004860">
    <property type="term" value="F:protein kinase inhibitor activity"/>
    <property type="evidence" value="ECO:0007669"/>
    <property type="project" value="UniProtKB-KW"/>
</dbReference>
<dbReference type="GO" id="GO:0032875">
    <property type="term" value="P:regulation of DNA endoreduplication"/>
    <property type="evidence" value="ECO:0007669"/>
    <property type="project" value="InterPro"/>
</dbReference>
<dbReference type="InterPro" id="IPR040389">
    <property type="entry name" value="SMR"/>
</dbReference>
<dbReference type="PANTHER" id="PTHR33142">
    <property type="entry name" value="CYCLIN-DEPENDENT PROTEIN KINASE INHIBITOR SMR13"/>
    <property type="match status" value="1"/>
</dbReference>
<dbReference type="PANTHER" id="PTHR33142:SF93">
    <property type="entry name" value="CYCLIN-DEPENDENT PROTEIN KINASE INHIBITOR SMR13"/>
    <property type="match status" value="1"/>
</dbReference>
<comment type="function">
    <text evidence="1">Probable cyclin-dependent protein kinase (CDK) inhibitor that functions as a repressor of mitosis in the endoreduplication cell cycle.</text>
</comment>
<comment type="sequence caution" evidence="3">
    <conflict type="erroneous gene model prediction">
        <sequence resource="EMBL-CDS" id="BAB01899"/>
    </conflict>
</comment>
<feature type="chain" id="PRO_0000438472" description="Cyclin-dependent protein kinase inhibitor SMR13">
    <location>
        <begin position="1"/>
        <end position="108"/>
    </location>
</feature>
<reference key="1">
    <citation type="journal article" date="2000" name="DNA Res.">
        <title>Structural analysis of Arabidopsis thaliana chromosome 3. II. Sequence features of the 4,251,695 bp regions covered by 90 P1, TAC and BAC clones.</title>
        <authorList>
            <person name="Kaneko T."/>
            <person name="Katoh T."/>
            <person name="Sato S."/>
            <person name="Nakamura Y."/>
            <person name="Asamizu E."/>
            <person name="Tabata S."/>
        </authorList>
    </citation>
    <scope>NUCLEOTIDE SEQUENCE [LARGE SCALE GENOMIC DNA]</scope>
    <source>
        <strain>cv. Columbia</strain>
    </source>
</reference>
<reference key="2">
    <citation type="journal article" date="2017" name="Plant J.">
        <title>Araport11: a complete reannotation of the Arabidopsis thaliana reference genome.</title>
        <authorList>
            <person name="Cheng C.Y."/>
            <person name="Krishnakumar V."/>
            <person name="Chan A.P."/>
            <person name="Thibaud-Nissen F."/>
            <person name="Schobel S."/>
            <person name="Town C.D."/>
        </authorList>
    </citation>
    <scope>GENOME REANNOTATION</scope>
    <source>
        <strain>cv. Columbia</strain>
    </source>
</reference>
<reference key="3">
    <citation type="journal article" date="2015" name="Plant Cell">
        <title>Functional conservation in the SIAMESE-RELATED family of cyclin-dependent kinase inhibitors in land plants.</title>
        <authorList>
            <person name="Kumar N."/>
            <person name="Harashima H."/>
            <person name="Kalve S."/>
            <person name="Bramsiepe J."/>
            <person name="Wang K."/>
            <person name="Sizani B.L."/>
            <person name="Bertrand L.L."/>
            <person name="Johnson M.C."/>
            <person name="Faulk C."/>
            <person name="Dale R."/>
            <person name="Simmons L.A."/>
            <person name="Churchman M.L."/>
            <person name="Sugimoto K."/>
            <person name="Kato N."/>
            <person name="Dasanayake M."/>
            <person name="Beemster G."/>
            <person name="Schnittger A."/>
            <person name="Larkin J.C."/>
        </authorList>
    </citation>
    <scope>FUNCTION</scope>
    <scope>GENE FAMILY</scope>
    <scope>NOMENCLATURE</scope>
</reference>
<evidence type="ECO:0000269" key="1">
    <source>
    </source>
</evidence>
<evidence type="ECO:0000303" key="2">
    <source>
    </source>
</evidence>
<evidence type="ECO:0000305" key="3"/>
<evidence type="ECO:0000312" key="4">
    <source>
        <dbReference type="Araport" id="AT3G20898"/>
    </source>
</evidence>
<evidence type="ECO:0000312" key="5">
    <source>
        <dbReference type="EMBL" id="BAB01899.1"/>
    </source>
</evidence>
<evidence type="ECO:0000312" key="6">
    <source>
        <dbReference type="Proteomes" id="UP000006548"/>
    </source>
</evidence>
<gene>
    <name evidence="2" type="primary">SMR13</name>
    <name evidence="4" type="ordered locus">At3g20898</name>
    <name evidence="5" type="ORF">MFD22.1</name>
</gene>
<proteinExistence type="predicted"/>
<protein>
    <recommendedName>
        <fullName evidence="2">Cyclin-dependent protein kinase inhibitor SMR13</fullName>
    </recommendedName>
    <alternativeName>
        <fullName evidence="2">Protein SIAMESE-RELATED 13</fullName>
    </alternativeName>
</protein>
<organism evidence="6">
    <name type="scientific">Arabidopsis thaliana</name>
    <name type="common">Mouse-ear cress</name>
    <dbReference type="NCBI Taxonomy" id="3702"/>
    <lineage>
        <taxon>Eukaryota</taxon>
        <taxon>Viridiplantae</taxon>
        <taxon>Streptophyta</taxon>
        <taxon>Embryophyta</taxon>
        <taxon>Tracheophyta</taxon>
        <taxon>Spermatophyta</taxon>
        <taxon>Magnoliopsida</taxon>
        <taxon>eudicotyledons</taxon>
        <taxon>Gunneridae</taxon>
        <taxon>Pentapetalae</taxon>
        <taxon>rosids</taxon>
        <taxon>malvids</taxon>
        <taxon>Brassicales</taxon>
        <taxon>Brassicaceae</taxon>
        <taxon>Camelineae</taxon>
        <taxon>Arabidopsis</taxon>
    </lineage>
</organism>
<keyword id="KW-0131">Cell cycle</keyword>
<keyword id="KW-0649">Protein kinase inhibitor</keyword>
<keyword id="KW-1185">Reference proteome</keyword>